<feature type="chain" id="PRO_0000301546" description="H(+)/Cl(-) exchange transporter ClcA">
    <location>
        <begin position="1"/>
        <end position="478"/>
    </location>
</feature>
<feature type="topological domain" description="Cytoplasmic" evidence="1">
    <location>
        <begin position="1"/>
        <end position="32"/>
    </location>
</feature>
<feature type="transmembrane region" description="Helical" evidence="1">
    <location>
        <begin position="33"/>
        <end position="69"/>
    </location>
</feature>
<feature type="topological domain" description="Periplasmic" evidence="1">
    <location>
        <begin position="70"/>
        <end position="76"/>
    </location>
</feature>
<feature type="transmembrane region" description="Helical" evidence="1">
    <location>
        <begin position="77"/>
        <end position="100"/>
    </location>
</feature>
<feature type="intramembrane region" description="Helical" evidence="1">
    <location>
        <begin position="109"/>
        <end position="116"/>
    </location>
</feature>
<feature type="topological domain" description="Cytoplasmic" evidence="1">
    <location>
        <begin position="117"/>
        <end position="123"/>
    </location>
</feature>
<feature type="transmembrane region" description="Helical" evidence="1">
    <location>
        <begin position="124"/>
        <end position="141"/>
    </location>
</feature>
<feature type="transmembrane region" description="Helical" evidence="1">
    <location>
        <begin position="148"/>
        <end position="166"/>
    </location>
</feature>
<feature type="topological domain" description="Cytoplasmic" evidence="1">
    <location>
        <begin position="167"/>
        <end position="176"/>
    </location>
</feature>
<feature type="intramembrane region" description="Helical" evidence="1">
    <location>
        <begin position="177"/>
        <end position="189"/>
    </location>
</feature>
<feature type="intramembrane region" description="Helical" evidence="1">
    <location>
        <begin position="193"/>
        <end position="201"/>
    </location>
</feature>
<feature type="topological domain" description="Cytoplasmic" evidence="1">
    <location>
        <begin position="202"/>
        <end position="214"/>
    </location>
</feature>
<feature type="transmembrane region" description="Helical" evidence="1">
    <location>
        <begin position="215"/>
        <end position="232"/>
    </location>
</feature>
<feature type="topological domain" description="Periplasmic" evidence="1">
    <location>
        <begin position="233"/>
        <end position="252"/>
    </location>
</feature>
<feature type="transmembrane region" description="Helical" evidence="1">
    <location>
        <begin position="253"/>
        <end position="281"/>
    </location>
</feature>
<feature type="topological domain" description="Cytoplasmic" evidence="1">
    <location>
        <begin position="282"/>
        <end position="287"/>
    </location>
</feature>
<feature type="transmembrane region" description="Helical" evidence="1">
    <location>
        <begin position="288"/>
        <end position="309"/>
    </location>
</feature>
<feature type="topological domain" description="Periplasmic" evidence="1">
    <location>
        <begin position="310"/>
        <end position="329"/>
    </location>
</feature>
<feature type="transmembrane region" description="Helical" evidence="1">
    <location>
        <begin position="330"/>
        <end position="349"/>
    </location>
</feature>
<feature type="transmembrane region" description="Helical" evidence="1">
    <location>
        <begin position="355"/>
        <end position="376"/>
    </location>
</feature>
<feature type="topological domain" description="Periplasmic" evidence="1">
    <location>
        <begin position="377"/>
        <end position="386"/>
    </location>
</feature>
<feature type="intramembrane region" description="Helical" evidence="1">
    <location>
        <begin position="387"/>
        <end position="401"/>
    </location>
</feature>
<feature type="intramembrane region" description="Note=Loop between two helices" evidence="1">
    <location>
        <begin position="402"/>
        <end position="404"/>
    </location>
</feature>
<feature type="intramembrane region" description="Helical" evidence="1">
    <location>
        <begin position="405"/>
        <end position="416"/>
    </location>
</feature>
<feature type="intramembrane region" description="Note=Loop between two helices" evidence="1">
    <location>
        <begin position="417"/>
        <end position="421"/>
    </location>
</feature>
<feature type="transmembrane region" description="Helical" evidence="1">
    <location>
        <begin position="422"/>
        <end position="438"/>
    </location>
</feature>
<feature type="topological domain" description="Cytoplasmic" evidence="1">
    <location>
        <begin position="439"/>
        <end position="478"/>
    </location>
</feature>
<feature type="short sequence motif" description="Selectivity filter part_1" evidence="1">
    <location>
        <begin position="106"/>
        <end position="110"/>
    </location>
</feature>
<feature type="short sequence motif" description="Selectivity filter part_2" evidence="1">
    <location>
        <begin position="146"/>
        <end position="150"/>
    </location>
</feature>
<feature type="short sequence motif" description="Selectivity filter part_3" evidence="1">
    <location>
        <begin position="355"/>
        <end position="359"/>
    </location>
</feature>
<feature type="binding site" evidence="1">
    <location>
        <position position="107"/>
    </location>
    <ligand>
        <name>chloride</name>
        <dbReference type="ChEBI" id="CHEBI:17996"/>
    </ligand>
</feature>
<feature type="binding site" evidence="1">
    <location>
        <position position="356"/>
    </location>
    <ligand>
        <name>chloride</name>
        <dbReference type="ChEBI" id="CHEBI:17996"/>
    </ligand>
</feature>
<feature type="binding site" evidence="1">
    <location>
        <position position="357"/>
    </location>
    <ligand>
        <name>chloride</name>
        <dbReference type="ChEBI" id="CHEBI:17996"/>
    </ligand>
</feature>
<feature type="binding site" evidence="1">
    <location>
        <position position="445"/>
    </location>
    <ligand>
        <name>chloride</name>
        <dbReference type="ChEBI" id="CHEBI:17996"/>
    </ligand>
</feature>
<feature type="site" description="Mediates proton transfer from the outer aqueous phase to the interior of the protein; involved in linking H(+) and Cl(-) transport" evidence="1">
    <location>
        <position position="148"/>
    </location>
</feature>
<feature type="site" description="Mediates proton transfer from the protein to the inner aqueous phase" evidence="1">
    <location>
        <position position="203"/>
    </location>
</feature>
<gene>
    <name evidence="1" type="primary">clcA</name>
    <name evidence="1" type="synonym">eriC</name>
    <name type="ordered locus">YPA_2888</name>
</gene>
<keyword id="KW-0050">Antiport</keyword>
<keyword id="KW-0997">Cell inner membrane</keyword>
<keyword id="KW-1003">Cell membrane</keyword>
<keyword id="KW-0868">Chloride</keyword>
<keyword id="KW-0406">Ion transport</keyword>
<keyword id="KW-0472">Membrane</keyword>
<keyword id="KW-0812">Transmembrane</keyword>
<keyword id="KW-1133">Transmembrane helix</keyword>
<keyword id="KW-0813">Transport</keyword>
<accession>Q1C3X2</accession>
<sequence>MTHSTQQLSPEGVAEGKRGRLIRELVNRDKTPLIILIMAAVVGVVTGLLGVAFDRGVDWVQQQRLLALANVADYALLVWPLAFIMSALLAMMGYFLVSRFAPEAGGSGIPEIEGAMEEMRPVRWWRVIPVKFIGGLGTLGAGMVLGREGPMVQMGGNSGRMIVDIFRLRSPEARHSLLATGAAAGLSAAFNAPLAGILFVIEEMRSQFRYSLVSIKAVFIGVITSTIVYRYFNGERAIIEVGKLSDAPLNTLWLYLLLGIIFGAVGVIFNALIFRTQDMFVRFHGGDWRKLVLIGGLLGGMCGLLALLHGNAVGGGFALIPIAAAGNFSIGMLLFIFIARVITTLLCFGSGAPGGIFAPMLALGTILGTAFGLSCAHFFPQYGIEAGTFAIAGMGALFAASVRAPLTGIVLVLEMTDNYQLILPMIVTCLGATLIAQFMGGKPLYSAILARTLAKQEQARATVIAQEPAVENTPQIGK</sequence>
<evidence type="ECO:0000255" key="1">
    <source>
        <dbReference type="HAMAP-Rule" id="MF_01128"/>
    </source>
</evidence>
<name>CLCA_YERPA</name>
<organism>
    <name type="scientific">Yersinia pestis bv. Antiqua (strain Antiqua)</name>
    <dbReference type="NCBI Taxonomy" id="360102"/>
    <lineage>
        <taxon>Bacteria</taxon>
        <taxon>Pseudomonadati</taxon>
        <taxon>Pseudomonadota</taxon>
        <taxon>Gammaproteobacteria</taxon>
        <taxon>Enterobacterales</taxon>
        <taxon>Yersiniaceae</taxon>
        <taxon>Yersinia</taxon>
    </lineage>
</organism>
<dbReference type="EMBL" id="CP000308">
    <property type="protein sequence ID" value="ABG14850.1"/>
    <property type="molecule type" value="Genomic_DNA"/>
</dbReference>
<dbReference type="RefSeq" id="WP_002209364.1">
    <property type="nucleotide sequence ID" value="NZ_CP009906.1"/>
</dbReference>
<dbReference type="SMR" id="Q1C3X2"/>
<dbReference type="GeneID" id="57975321"/>
<dbReference type="KEGG" id="ypa:YPA_2888"/>
<dbReference type="Proteomes" id="UP000001971">
    <property type="component" value="Chromosome"/>
</dbReference>
<dbReference type="GO" id="GO:0005886">
    <property type="term" value="C:plasma membrane"/>
    <property type="evidence" value="ECO:0007669"/>
    <property type="project" value="UniProtKB-SubCell"/>
</dbReference>
<dbReference type="GO" id="GO:0015297">
    <property type="term" value="F:antiporter activity"/>
    <property type="evidence" value="ECO:0007669"/>
    <property type="project" value="UniProtKB-UniRule"/>
</dbReference>
<dbReference type="GO" id="GO:0005247">
    <property type="term" value="F:voltage-gated chloride channel activity"/>
    <property type="evidence" value="ECO:0007669"/>
    <property type="project" value="TreeGrafter"/>
</dbReference>
<dbReference type="CDD" id="cd01031">
    <property type="entry name" value="EriC"/>
    <property type="match status" value="1"/>
</dbReference>
<dbReference type="FunFam" id="1.10.3080.10:FF:000005">
    <property type="entry name" value="H(+)/Cl(-) exchange transporter ClcA"/>
    <property type="match status" value="1"/>
</dbReference>
<dbReference type="Gene3D" id="1.10.3080.10">
    <property type="entry name" value="Clc chloride channel"/>
    <property type="match status" value="1"/>
</dbReference>
<dbReference type="HAMAP" id="MF_01128">
    <property type="entry name" value="CLC_ClcA"/>
    <property type="match status" value="1"/>
</dbReference>
<dbReference type="InterPro" id="IPR023861">
    <property type="entry name" value="Cl-channel_ClcA"/>
</dbReference>
<dbReference type="InterPro" id="IPR014743">
    <property type="entry name" value="Cl-channel_core"/>
</dbReference>
<dbReference type="InterPro" id="IPR001807">
    <property type="entry name" value="ClC"/>
</dbReference>
<dbReference type="NCBIfam" id="NF003640">
    <property type="entry name" value="PRK05277.1"/>
    <property type="match status" value="1"/>
</dbReference>
<dbReference type="PANTHER" id="PTHR45711">
    <property type="entry name" value="CHLORIDE CHANNEL PROTEIN"/>
    <property type="match status" value="1"/>
</dbReference>
<dbReference type="PANTHER" id="PTHR45711:SF6">
    <property type="entry name" value="CHLORIDE CHANNEL PROTEIN"/>
    <property type="match status" value="1"/>
</dbReference>
<dbReference type="Pfam" id="PF00654">
    <property type="entry name" value="Voltage_CLC"/>
    <property type="match status" value="1"/>
</dbReference>
<dbReference type="PRINTS" id="PR00762">
    <property type="entry name" value="CLCHANNEL"/>
</dbReference>
<dbReference type="SUPFAM" id="SSF81340">
    <property type="entry name" value="Clc chloride channel"/>
    <property type="match status" value="1"/>
</dbReference>
<protein>
    <recommendedName>
        <fullName evidence="1">H(+)/Cl(-) exchange transporter ClcA</fullName>
    </recommendedName>
</protein>
<comment type="function">
    <text evidence="1">Proton-coupled chloride transporter. Functions as antiport system and exchanges two chloride ions for 1 proton. Probably acts as an electrical shunt for an outwardly-directed proton pump that is linked to amino acid decarboxylation, as part of the extreme acid resistance (XAR) response.</text>
</comment>
<comment type="catalytic activity">
    <reaction evidence="1">
        <text>2 chloride(in) + H(+)(out) = 2 chloride(out) + H(+)(in)</text>
        <dbReference type="Rhea" id="RHEA:29567"/>
        <dbReference type="ChEBI" id="CHEBI:15378"/>
        <dbReference type="ChEBI" id="CHEBI:17996"/>
    </reaction>
</comment>
<comment type="subunit">
    <text evidence="1">Homodimer.</text>
</comment>
<comment type="subcellular location">
    <subcellularLocation>
        <location evidence="1">Cell inner membrane</location>
        <topology evidence="1">Multi-pass membrane protein</topology>
    </subcellularLocation>
</comment>
<comment type="similarity">
    <text evidence="1">Belongs to the chloride channel (TC 2.A.49) family. ClcA subfamily.</text>
</comment>
<reference key="1">
    <citation type="journal article" date="2006" name="J. Bacteriol.">
        <title>Complete genome sequence of Yersinia pestis strains Antiqua and Nepal516: evidence of gene reduction in an emerging pathogen.</title>
        <authorList>
            <person name="Chain P.S.G."/>
            <person name="Hu P."/>
            <person name="Malfatti S.A."/>
            <person name="Radnedge L."/>
            <person name="Larimer F."/>
            <person name="Vergez L.M."/>
            <person name="Worsham P."/>
            <person name="Chu M.C."/>
            <person name="Andersen G.L."/>
        </authorList>
    </citation>
    <scope>NUCLEOTIDE SEQUENCE [LARGE SCALE GENOMIC DNA]</scope>
    <source>
        <strain>Antiqua</strain>
    </source>
</reference>
<proteinExistence type="inferred from homology"/>